<sequence length="140" mass="15043">MAKKVVGIVKVRIPGGEATPAPPLGPALGQKQIQIAAFVKDFNAKTSKMKGQLLNTYITVYEDKTYTFVTKGTSTSTLIKKKLGIEKGSGEPNKTKVATINQKQLEEIAQEKMAYMSANDIEAAKKIVAGTARAMGIKVE</sequence>
<keyword id="KW-0488">Methylation</keyword>
<keyword id="KW-0687">Ribonucleoprotein</keyword>
<keyword id="KW-0689">Ribosomal protein</keyword>
<keyword id="KW-0694">RNA-binding</keyword>
<keyword id="KW-0699">rRNA-binding</keyword>
<gene>
    <name evidence="1" type="primary">rplK</name>
    <name type="ordered locus">BHWA1_02321</name>
</gene>
<accession>C0QWX2</accession>
<dbReference type="EMBL" id="CP001357">
    <property type="protein sequence ID" value="ACN84775.1"/>
    <property type="molecule type" value="Genomic_DNA"/>
</dbReference>
<dbReference type="RefSeq" id="WP_012671806.1">
    <property type="nucleotide sequence ID" value="NC_012225.1"/>
</dbReference>
<dbReference type="SMR" id="C0QWX2"/>
<dbReference type="STRING" id="565034.BHWA1_02321"/>
<dbReference type="GeneID" id="63963473"/>
<dbReference type="KEGG" id="bhy:BHWA1_02321"/>
<dbReference type="eggNOG" id="COG0080">
    <property type="taxonomic scope" value="Bacteria"/>
</dbReference>
<dbReference type="HOGENOM" id="CLU_074237_2_0_12"/>
<dbReference type="Proteomes" id="UP000001803">
    <property type="component" value="Chromosome"/>
</dbReference>
<dbReference type="GO" id="GO:0022625">
    <property type="term" value="C:cytosolic large ribosomal subunit"/>
    <property type="evidence" value="ECO:0007669"/>
    <property type="project" value="TreeGrafter"/>
</dbReference>
<dbReference type="GO" id="GO:0070180">
    <property type="term" value="F:large ribosomal subunit rRNA binding"/>
    <property type="evidence" value="ECO:0007669"/>
    <property type="project" value="UniProtKB-UniRule"/>
</dbReference>
<dbReference type="GO" id="GO:0003735">
    <property type="term" value="F:structural constituent of ribosome"/>
    <property type="evidence" value="ECO:0007669"/>
    <property type="project" value="InterPro"/>
</dbReference>
<dbReference type="GO" id="GO:0006412">
    <property type="term" value="P:translation"/>
    <property type="evidence" value="ECO:0007669"/>
    <property type="project" value="UniProtKB-UniRule"/>
</dbReference>
<dbReference type="CDD" id="cd00349">
    <property type="entry name" value="Ribosomal_L11"/>
    <property type="match status" value="1"/>
</dbReference>
<dbReference type="Gene3D" id="1.10.10.250">
    <property type="entry name" value="Ribosomal protein L11, C-terminal domain"/>
    <property type="match status" value="1"/>
</dbReference>
<dbReference type="Gene3D" id="3.30.1550.10">
    <property type="entry name" value="Ribosomal protein L11/L12, N-terminal domain"/>
    <property type="match status" value="1"/>
</dbReference>
<dbReference type="HAMAP" id="MF_00736">
    <property type="entry name" value="Ribosomal_uL11"/>
    <property type="match status" value="1"/>
</dbReference>
<dbReference type="InterPro" id="IPR000911">
    <property type="entry name" value="Ribosomal_uL11"/>
</dbReference>
<dbReference type="InterPro" id="IPR006519">
    <property type="entry name" value="Ribosomal_uL11_bac-typ"/>
</dbReference>
<dbReference type="InterPro" id="IPR020783">
    <property type="entry name" value="Ribosomal_uL11_C"/>
</dbReference>
<dbReference type="InterPro" id="IPR036769">
    <property type="entry name" value="Ribosomal_uL11_C_sf"/>
</dbReference>
<dbReference type="InterPro" id="IPR020784">
    <property type="entry name" value="Ribosomal_uL11_N"/>
</dbReference>
<dbReference type="InterPro" id="IPR036796">
    <property type="entry name" value="Ribosomal_uL11_N_sf"/>
</dbReference>
<dbReference type="NCBIfam" id="TIGR01632">
    <property type="entry name" value="L11_bact"/>
    <property type="match status" value="1"/>
</dbReference>
<dbReference type="PANTHER" id="PTHR11661">
    <property type="entry name" value="60S RIBOSOMAL PROTEIN L12"/>
    <property type="match status" value="1"/>
</dbReference>
<dbReference type="PANTHER" id="PTHR11661:SF1">
    <property type="entry name" value="LARGE RIBOSOMAL SUBUNIT PROTEIN UL11M"/>
    <property type="match status" value="1"/>
</dbReference>
<dbReference type="Pfam" id="PF00298">
    <property type="entry name" value="Ribosomal_L11"/>
    <property type="match status" value="1"/>
</dbReference>
<dbReference type="Pfam" id="PF03946">
    <property type="entry name" value="Ribosomal_L11_N"/>
    <property type="match status" value="1"/>
</dbReference>
<dbReference type="SMART" id="SM00649">
    <property type="entry name" value="RL11"/>
    <property type="match status" value="1"/>
</dbReference>
<dbReference type="SUPFAM" id="SSF54747">
    <property type="entry name" value="Ribosomal L11/L12e N-terminal domain"/>
    <property type="match status" value="1"/>
</dbReference>
<dbReference type="SUPFAM" id="SSF46906">
    <property type="entry name" value="Ribosomal protein L11, C-terminal domain"/>
    <property type="match status" value="1"/>
</dbReference>
<name>RL11_BRAHW</name>
<comment type="function">
    <text evidence="1">Forms part of the ribosomal stalk which helps the ribosome interact with GTP-bound translation factors.</text>
</comment>
<comment type="subunit">
    <text evidence="1">Part of the ribosomal stalk of the 50S ribosomal subunit. Interacts with L10 and the large rRNA to form the base of the stalk. L10 forms an elongated spine to which L12 dimers bind in a sequential fashion forming a multimeric L10(L12)X complex.</text>
</comment>
<comment type="PTM">
    <text evidence="1">One or more lysine residues are methylated.</text>
</comment>
<comment type="similarity">
    <text evidence="1">Belongs to the universal ribosomal protein uL11 family.</text>
</comment>
<feature type="chain" id="PRO_1000195585" description="Large ribosomal subunit protein uL11">
    <location>
        <begin position="1"/>
        <end position="140"/>
    </location>
</feature>
<proteinExistence type="inferred from homology"/>
<reference key="1">
    <citation type="journal article" date="2009" name="PLoS ONE">
        <title>Genome sequence of the pathogenic intestinal spirochete Brachyspira hyodysenteriae reveals adaptations to its lifestyle in the porcine large intestine.</title>
        <authorList>
            <person name="Bellgard M.I."/>
            <person name="Wanchanthuek P."/>
            <person name="La T."/>
            <person name="Ryan K."/>
            <person name="Moolhuijzen P."/>
            <person name="Albertyn Z."/>
            <person name="Shaban B."/>
            <person name="Motro Y."/>
            <person name="Dunn D.S."/>
            <person name="Schibeci D."/>
            <person name="Hunter A."/>
            <person name="Barrero R."/>
            <person name="Phillips N.D."/>
            <person name="Hampson D.J."/>
        </authorList>
    </citation>
    <scope>NUCLEOTIDE SEQUENCE [LARGE SCALE GENOMIC DNA]</scope>
    <source>
        <strain>ATCC 49526 / WA1</strain>
    </source>
</reference>
<organism>
    <name type="scientific">Brachyspira hyodysenteriae (strain ATCC 49526 / WA1)</name>
    <dbReference type="NCBI Taxonomy" id="565034"/>
    <lineage>
        <taxon>Bacteria</taxon>
        <taxon>Pseudomonadati</taxon>
        <taxon>Spirochaetota</taxon>
        <taxon>Spirochaetia</taxon>
        <taxon>Brachyspirales</taxon>
        <taxon>Brachyspiraceae</taxon>
        <taxon>Brachyspira</taxon>
    </lineage>
</organism>
<evidence type="ECO:0000255" key="1">
    <source>
        <dbReference type="HAMAP-Rule" id="MF_00736"/>
    </source>
</evidence>
<evidence type="ECO:0000305" key="2"/>
<protein>
    <recommendedName>
        <fullName evidence="1">Large ribosomal subunit protein uL11</fullName>
    </recommendedName>
    <alternativeName>
        <fullName evidence="2">50S ribosomal protein L11</fullName>
    </alternativeName>
</protein>